<protein>
    <recommendedName>
        <fullName evidence="1">Protein-export protein SecB</fullName>
    </recommendedName>
</protein>
<sequence length="164" mass="17897">MSDVENQPFFNIQRVYLKDMSLEQPNSPAIFLEQDMPSVEVEVDVKADRLAESVFEVVVSGTVTAKVKDKVAFLIEAKQAGIFDIRNIPDEQLDPLVGIACPTILFPYLRSNIADAITRAGFPPIHLAEINFQALYEQRLAQLQQQAGAAAGAPNGAPNGTTLN</sequence>
<keyword id="KW-0143">Chaperone</keyword>
<keyword id="KW-0963">Cytoplasm</keyword>
<keyword id="KW-0653">Protein transport</keyword>
<keyword id="KW-0811">Translocation</keyword>
<keyword id="KW-0813">Transport</keyword>
<evidence type="ECO:0000255" key="1">
    <source>
        <dbReference type="HAMAP-Rule" id="MF_00821"/>
    </source>
</evidence>
<accession>Q1BTB4</accession>
<name>SECB_BURO1</name>
<feature type="chain" id="PRO_1000062457" description="Protein-export protein SecB">
    <location>
        <begin position="1"/>
        <end position="164"/>
    </location>
</feature>
<proteinExistence type="inferred from homology"/>
<organism>
    <name type="scientific">Burkholderia orbicola (strain AU 1054)</name>
    <dbReference type="NCBI Taxonomy" id="331271"/>
    <lineage>
        <taxon>Bacteria</taxon>
        <taxon>Pseudomonadati</taxon>
        <taxon>Pseudomonadota</taxon>
        <taxon>Betaproteobacteria</taxon>
        <taxon>Burkholderiales</taxon>
        <taxon>Burkholderiaceae</taxon>
        <taxon>Burkholderia</taxon>
        <taxon>Burkholderia cepacia complex</taxon>
        <taxon>Burkholderia orbicola</taxon>
    </lineage>
</organism>
<dbReference type="EMBL" id="CP000378">
    <property type="protein sequence ID" value="ABF77141.1"/>
    <property type="molecule type" value="Genomic_DNA"/>
</dbReference>
<dbReference type="SMR" id="Q1BTB4"/>
<dbReference type="HOGENOM" id="CLU_111574_1_0_4"/>
<dbReference type="GO" id="GO:0005737">
    <property type="term" value="C:cytoplasm"/>
    <property type="evidence" value="ECO:0007669"/>
    <property type="project" value="UniProtKB-SubCell"/>
</dbReference>
<dbReference type="GO" id="GO:0051082">
    <property type="term" value="F:unfolded protein binding"/>
    <property type="evidence" value="ECO:0007669"/>
    <property type="project" value="InterPro"/>
</dbReference>
<dbReference type="GO" id="GO:0006457">
    <property type="term" value="P:protein folding"/>
    <property type="evidence" value="ECO:0007669"/>
    <property type="project" value="UniProtKB-UniRule"/>
</dbReference>
<dbReference type="GO" id="GO:0051262">
    <property type="term" value="P:protein tetramerization"/>
    <property type="evidence" value="ECO:0007669"/>
    <property type="project" value="InterPro"/>
</dbReference>
<dbReference type="GO" id="GO:0015031">
    <property type="term" value="P:protein transport"/>
    <property type="evidence" value="ECO:0007669"/>
    <property type="project" value="UniProtKB-UniRule"/>
</dbReference>
<dbReference type="Gene3D" id="3.10.420.10">
    <property type="entry name" value="SecB-like"/>
    <property type="match status" value="1"/>
</dbReference>
<dbReference type="HAMAP" id="MF_00821">
    <property type="entry name" value="SecB"/>
    <property type="match status" value="1"/>
</dbReference>
<dbReference type="InterPro" id="IPR003708">
    <property type="entry name" value="SecB"/>
</dbReference>
<dbReference type="InterPro" id="IPR035958">
    <property type="entry name" value="SecB-like_sf"/>
</dbReference>
<dbReference type="NCBIfam" id="NF004392">
    <property type="entry name" value="PRK05751.1-3"/>
    <property type="match status" value="1"/>
</dbReference>
<dbReference type="NCBIfam" id="NF004394">
    <property type="entry name" value="PRK05751.1-5"/>
    <property type="match status" value="1"/>
</dbReference>
<dbReference type="NCBIfam" id="TIGR00809">
    <property type="entry name" value="secB"/>
    <property type="match status" value="1"/>
</dbReference>
<dbReference type="PANTHER" id="PTHR36918">
    <property type="match status" value="1"/>
</dbReference>
<dbReference type="PANTHER" id="PTHR36918:SF1">
    <property type="entry name" value="PROTEIN-EXPORT PROTEIN SECB"/>
    <property type="match status" value="1"/>
</dbReference>
<dbReference type="Pfam" id="PF02556">
    <property type="entry name" value="SecB"/>
    <property type="match status" value="1"/>
</dbReference>
<dbReference type="PRINTS" id="PR01594">
    <property type="entry name" value="SECBCHAPRONE"/>
</dbReference>
<dbReference type="SUPFAM" id="SSF54611">
    <property type="entry name" value="SecB-like"/>
    <property type="match status" value="1"/>
</dbReference>
<reference key="1">
    <citation type="submission" date="2006-05" db="EMBL/GenBank/DDBJ databases">
        <title>Complete sequence of chromosome 1 of Burkholderia cenocepacia AU 1054.</title>
        <authorList>
            <consortium name="US DOE Joint Genome Institute"/>
            <person name="Copeland A."/>
            <person name="Lucas S."/>
            <person name="Lapidus A."/>
            <person name="Barry K."/>
            <person name="Detter J.C."/>
            <person name="Glavina del Rio T."/>
            <person name="Hammon N."/>
            <person name="Israni S."/>
            <person name="Dalin E."/>
            <person name="Tice H."/>
            <person name="Pitluck S."/>
            <person name="Chain P."/>
            <person name="Malfatti S."/>
            <person name="Shin M."/>
            <person name="Vergez L."/>
            <person name="Schmutz J."/>
            <person name="Larimer F."/>
            <person name="Land M."/>
            <person name="Hauser L."/>
            <person name="Kyrpides N."/>
            <person name="Lykidis A."/>
            <person name="LiPuma J.J."/>
            <person name="Konstantinidis K."/>
            <person name="Tiedje J.M."/>
            <person name="Richardson P."/>
        </authorList>
    </citation>
    <scope>NUCLEOTIDE SEQUENCE [LARGE SCALE GENOMIC DNA]</scope>
    <source>
        <strain>AU 1054</strain>
    </source>
</reference>
<gene>
    <name evidence="1" type="primary">secB</name>
    <name type="ordered locus">Bcen_2240</name>
</gene>
<comment type="function">
    <text evidence="1">One of the proteins required for the normal export of preproteins out of the cell cytoplasm. It is a molecular chaperone that binds to a subset of precursor proteins, maintaining them in a translocation-competent state. It also specifically binds to its receptor SecA.</text>
</comment>
<comment type="subunit">
    <text evidence="1">Homotetramer, a dimer of dimers. One homotetramer interacts with 1 SecA dimer.</text>
</comment>
<comment type="subcellular location">
    <subcellularLocation>
        <location evidence="1">Cytoplasm</location>
    </subcellularLocation>
</comment>
<comment type="similarity">
    <text evidence="1">Belongs to the SecB family.</text>
</comment>